<reference key="1">
    <citation type="submission" date="2006-12" db="EMBL/GenBank/DDBJ databases">
        <title>Complete sequence of Chlorobium phaeobacteroides DSM 266.</title>
        <authorList>
            <consortium name="US DOE Joint Genome Institute"/>
            <person name="Copeland A."/>
            <person name="Lucas S."/>
            <person name="Lapidus A."/>
            <person name="Barry K."/>
            <person name="Detter J.C."/>
            <person name="Glavina del Rio T."/>
            <person name="Hammon N."/>
            <person name="Israni S."/>
            <person name="Pitluck S."/>
            <person name="Goltsman E."/>
            <person name="Schmutz J."/>
            <person name="Larimer F."/>
            <person name="Land M."/>
            <person name="Hauser L."/>
            <person name="Mikhailova N."/>
            <person name="Li T."/>
            <person name="Overmann J."/>
            <person name="Bryant D.A."/>
            <person name="Richardson P."/>
        </authorList>
    </citation>
    <scope>NUCLEOTIDE SEQUENCE [LARGE SCALE GENOMIC DNA]</scope>
    <source>
        <strain>DSM 266 / SMG 266 / 2430</strain>
    </source>
</reference>
<comment type="function">
    <text evidence="1">One of the primary rRNA binding proteins. Required for association of the 30S and 50S subunits to form the 70S ribosome, for tRNA binding and peptide bond formation. It has been suggested to have peptidyltransferase activity; this is somewhat controversial. Makes several contacts with the 16S rRNA in the 70S ribosome.</text>
</comment>
<comment type="subunit">
    <text evidence="1">Part of the 50S ribosomal subunit. Forms a bridge to the 30S subunit in the 70S ribosome.</text>
</comment>
<comment type="similarity">
    <text evidence="1">Belongs to the universal ribosomal protein uL2 family.</text>
</comment>
<comment type="sequence caution" evidence="3">
    <conflict type="erroneous initiation">
        <sequence resource="EMBL-CDS" id="ABL66408"/>
    </conflict>
</comment>
<dbReference type="EMBL" id="CP000492">
    <property type="protein sequence ID" value="ABL66408.1"/>
    <property type="status" value="ALT_INIT"/>
    <property type="molecule type" value="Genomic_DNA"/>
</dbReference>
<dbReference type="RefSeq" id="WP_081428241.1">
    <property type="nucleotide sequence ID" value="NC_008639.1"/>
</dbReference>
<dbReference type="SMR" id="A1BJ31"/>
<dbReference type="STRING" id="290317.Cpha266_2420"/>
<dbReference type="KEGG" id="cph:Cpha266_2420"/>
<dbReference type="eggNOG" id="COG0090">
    <property type="taxonomic scope" value="Bacteria"/>
</dbReference>
<dbReference type="HOGENOM" id="CLU_036235_2_1_10"/>
<dbReference type="OrthoDB" id="9778722at2"/>
<dbReference type="Proteomes" id="UP000008701">
    <property type="component" value="Chromosome"/>
</dbReference>
<dbReference type="GO" id="GO:0015934">
    <property type="term" value="C:large ribosomal subunit"/>
    <property type="evidence" value="ECO:0007669"/>
    <property type="project" value="InterPro"/>
</dbReference>
<dbReference type="GO" id="GO:0019843">
    <property type="term" value="F:rRNA binding"/>
    <property type="evidence" value="ECO:0007669"/>
    <property type="project" value="UniProtKB-UniRule"/>
</dbReference>
<dbReference type="GO" id="GO:0003735">
    <property type="term" value="F:structural constituent of ribosome"/>
    <property type="evidence" value="ECO:0007669"/>
    <property type="project" value="InterPro"/>
</dbReference>
<dbReference type="GO" id="GO:0016740">
    <property type="term" value="F:transferase activity"/>
    <property type="evidence" value="ECO:0007669"/>
    <property type="project" value="InterPro"/>
</dbReference>
<dbReference type="GO" id="GO:0002181">
    <property type="term" value="P:cytoplasmic translation"/>
    <property type="evidence" value="ECO:0007669"/>
    <property type="project" value="TreeGrafter"/>
</dbReference>
<dbReference type="FunFam" id="2.30.30.30:FF:000001">
    <property type="entry name" value="50S ribosomal protein L2"/>
    <property type="match status" value="1"/>
</dbReference>
<dbReference type="FunFam" id="2.40.50.140:FF:000003">
    <property type="entry name" value="50S ribosomal protein L2"/>
    <property type="match status" value="1"/>
</dbReference>
<dbReference type="FunFam" id="4.10.950.10:FF:000001">
    <property type="entry name" value="50S ribosomal protein L2"/>
    <property type="match status" value="1"/>
</dbReference>
<dbReference type="Gene3D" id="2.30.30.30">
    <property type="match status" value="1"/>
</dbReference>
<dbReference type="Gene3D" id="2.40.50.140">
    <property type="entry name" value="Nucleic acid-binding proteins"/>
    <property type="match status" value="1"/>
</dbReference>
<dbReference type="Gene3D" id="4.10.950.10">
    <property type="entry name" value="Ribosomal protein L2, domain 3"/>
    <property type="match status" value="1"/>
</dbReference>
<dbReference type="HAMAP" id="MF_01320_B">
    <property type="entry name" value="Ribosomal_uL2_B"/>
    <property type="match status" value="1"/>
</dbReference>
<dbReference type="InterPro" id="IPR012340">
    <property type="entry name" value="NA-bd_OB-fold"/>
</dbReference>
<dbReference type="InterPro" id="IPR014722">
    <property type="entry name" value="Rib_uL2_dom2"/>
</dbReference>
<dbReference type="InterPro" id="IPR002171">
    <property type="entry name" value="Ribosomal_uL2"/>
</dbReference>
<dbReference type="InterPro" id="IPR005880">
    <property type="entry name" value="Ribosomal_uL2_bac/org-type"/>
</dbReference>
<dbReference type="InterPro" id="IPR022669">
    <property type="entry name" value="Ribosomal_uL2_C"/>
</dbReference>
<dbReference type="InterPro" id="IPR014726">
    <property type="entry name" value="Ribosomal_uL2_dom3"/>
</dbReference>
<dbReference type="InterPro" id="IPR022666">
    <property type="entry name" value="Ribosomal_uL2_RNA-bd_dom"/>
</dbReference>
<dbReference type="InterPro" id="IPR008991">
    <property type="entry name" value="Translation_prot_SH3-like_sf"/>
</dbReference>
<dbReference type="NCBIfam" id="TIGR01171">
    <property type="entry name" value="rplB_bact"/>
    <property type="match status" value="1"/>
</dbReference>
<dbReference type="PANTHER" id="PTHR13691:SF5">
    <property type="entry name" value="LARGE RIBOSOMAL SUBUNIT PROTEIN UL2M"/>
    <property type="match status" value="1"/>
</dbReference>
<dbReference type="PANTHER" id="PTHR13691">
    <property type="entry name" value="RIBOSOMAL PROTEIN L2"/>
    <property type="match status" value="1"/>
</dbReference>
<dbReference type="Pfam" id="PF00181">
    <property type="entry name" value="Ribosomal_L2"/>
    <property type="match status" value="1"/>
</dbReference>
<dbReference type="Pfam" id="PF03947">
    <property type="entry name" value="Ribosomal_L2_C"/>
    <property type="match status" value="1"/>
</dbReference>
<dbReference type="PIRSF" id="PIRSF002158">
    <property type="entry name" value="Ribosomal_L2"/>
    <property type="match status" value="1"/>
</dbReference>
<dbReference type="SMART" id="SM01383">
    <property type="entry name" value="Ribosomal_L2"/>
    <property type="match status" value="1"/>
</dbReference>
<dbReference type="SMART" id="SM01382">
    <property type="entry name" value="Ribosomal_L2_C"/>
    <property type="match status" value="1"/>
</dbReference>
<dbReference type="SUPFAM" id="SSF50249">
    <property type="entry name" value="Nucleic acid-binding proteins"/>
    <property type="match status" value="1"/>
</dbReference>
<dbReference type="SUPFAM" id="SSF50104">
    <property type="entry name" value="Translation proteins SH3-like domain"/>
    <property type="match status" value="1"/>
</dbReference>
<feature type="chain" id="PRO_0000309895" description="Large ribosomal subunit protein uL2">
    <location>
        <begin position="1"/>
        <end position="279"/>
    </location>
</feature>
<feature type="region of interest" description="Disordered" evidence="2">
    <location>
        <begin position="222"/>
        <end position="279"/>
    </location>
</feature>
<feature type="compositionally biased region" description="Gly residues" evidence="2">
    <location>
        <begin position="232"/>
        <end position="242"/>
    </location>
</feature>
<feature type="compositionally biased region" description="Basic residues" evidence="2">
    <location>
        <begin position="259"/>
        <end position="268"/>
    </location>
</feature>
<name>RL2_CHLPD</name>
<accession>A1BJ31</accession>
<evidence type="ECO:0000255" key="1">
    <source>
        <dbReference type="HAMAP-Rule" id="MF_01320"/>
    </source>
</evidence>
<evidence type="ECO:0000256" key="2">
    <source>
        <dbReference type="SAM" id="MobiDB-lite"/>
    </source>
</evidence>
<evidence type="ECO:0000305" key="3"/>
<organism>
    <name type="scientific">Chlorobium phaeobacteroides (strain DSM 266 / SMG 266 / 2430)</name>
    <dbReference type="NCBI Taxonomy" id="290317"/>
    <lineage>
        <taxon>Bacteria</taxon>
        <taxon>Pseudomonadati</taxon>
        <taxon>Chlorobiota</taxon>
        <taxon>Chlorobiia</taxon>
        <taxon>Chlorobiales</taxon>
        <taxon>Chlorobiaceae</taxon>
        <taxon>Chlorobium/Pelodictyon group</taxon>
        <taxon>Chlorobium</taxon>
    </lineage>
</organism>
<sequence>MAIRKLAPVTPGSRFMSYPGFDEITKSEPEKSLLVPVKRTGGRNRAGRITSRHMGGGHKRHYRIIDFKRNKDGVPATVASIEYDPNRSSRIALLHYNDGEKRYILAPKGLKVGEKVESGEKVEIKTGNTMPLKNIPLGTDIHNVEMRAGKGGQIVRSAGAFAVLAAREGDYVTLKLPSGEIRKVRVECRATIGVVGNAEHENIVLGKAGRSRWLGIRPQTRGMAMNPVDHPMGGGEGKSKSGGGRRHPKSPWGQLAKGLKTRNKKKASQKLIVRGRNAK</sequence>
<protein>
    <recommendedName>
        <fullName evidence="1">Large ribosomal subunit protein uL2</fullName>
    </recommendedName>
    <alternativeName>
        <fullName evidence="3">50S ribosomal protein L2</fullName>
    </alternativeName>
</protein>
<gene>
    <name evidence="1" type="primary">rplB</name>
    <name type="ordered locus">Cpha266_2420</name>
</gene>
<keyword id="KW-1185">Reference proteome</keyword>
<keyword id="KW-0687">Ribonucleoprotein</keyword>
<keyword id="KW-0689">Ribosomal protein</keyword>
<keyword id="KW-0694">RNA-binding</keyword>
<keyword id="KW-0699">rRNA-binding</keyword>
<proteinExistence type="inferred from homology"/>